<accession>J7H5K9</accession>
<feature type="chain" id="PRO_0000443036" description="Putative membrane protein">
    <location>
        <begin position="1"/>
        <end position="116"/>
    </location>
</feature>
<feature type="transmembrane region" description="Helical" evidence="1">
    <location>
        <begin position="13"/>
        <end position="33"/>
    </location>
</feature>
<organism>
    <name type="scientific">Alethinophid 1 reptarenavirus (isolate AlRrV1/Boa/USA/BC/2009)</name>
    <name type="common">Golden Gate virus</name>
    <dbReference type="NCBI Taxonomy" id="1223562"/>
    <lineage>
        <taxon>Viruses</taxon>
        <taxon>Riboviria</taxon>
        <taxon>Orthornavirae</taxon>
        <taxon>Negarnaviricota</taxon>
        <taxon>Polyploviricotina</taxon>
        <taxon>Ellioviricetes</taxon>
        <taxon>Bunyavirales</taxon>
        <taxon>Arenaviridae</taxon>
        <taxon>Reptarenavirus</taxon>
        <taxon>Reptarenavirus aurei</taxon>
    </lineage>
</organism>
<gene>
    <name type="ordered locus">Segment L</name>
</gene>
<comment type="subcellular location">
    <subcellularLocation>
        <location evidence="1">Host membrane</location>
        <topology evidence="1">Single-pass membrane protein</topology>
    </subcellularLocation>
</comment>
<reference key="1">
    <citation type="journal article" date="2012" name="MBio">
        <title>Identification, characterization, and in vitro culture of highly divergent arenaviruses from bosysa constrictors and annulated tree boas: candidate etiological agents for snake inclusion body disease.</title>
        <authorList>
            <person name="Stenglein M.D."/>
            <person name="Sanders C."/>
            <person name="Kistler A.L."/>
            <person name="Ruby J.G."/>
            <person name="Franco J.Y."/>
            <person name="Reavill D.R."/>
            <person name="Dunker F."/>
            <person name="Derisi J.L."/>
        </authorList>
    </citation>
    <scope>NUCLEOTIDE SEQUENCE [LARGE SCALE GENOMIC DNA]</scope>
</reference>
<proteinExistence type="inferred from homology"/>
<sequence length="116" mass="12702">MSGSTAIGLTTEVISIITFILVIAIFVIEIVSCVTMMTLKAITLKKRLSFCQGCGKNASLVILPCKNKVCMECALKMRCPVCYEACLWCENPDGSLSSLALINKERNKVRDNLPEP</sequence>
<protein>
    <recommendedName>
        <fullName>Putative membrane protein</fullName>
    </recommendedName>
</protein>
<dbReference type="EMBL" id="JQ717263">
    <property type="protein sequence ID" value="AFP93554.1"/>
    <property type="molecule type" value="Genomic_RNA"/>
</dbReference>
<dbReference type="SMR" id="J7H5K9"/>
<dbReference type="KEGG" id="vg:13466436"/>
<dbReference type="OrthoDB" id="17576at10239"/>
<dbReference type="Proteomes" id="UP000134698">
    <property type="component" value="Genome"/>
</dbReference>
<dbReference type="GO" id="GO:0033644">
    <property type="term" value="C:host cell membrane"/>
    <property type="evidence" value="ECO:0007669"/>
    <property type="project" value="UniProtKB-SubCell"/>
</dbReference>
<dbReference type="GO" id="GO:0016020">
    <property type="term" value="C:membrane"/>
    <property type="evidence" value="ECO:0007669"/>
    <property type="project" value="UniProtKB-KW"/>
</dbReference>
<name>MEM_GOGV</name>
<evidence type="ECO:0000255" key="1"/>
<organismHost>
    <name type="scientific">Boa constrictor</name>
    <name type="common">Boa</name>
    <dbReference type="NCBI Taxonomy" id="8574"/>
</organismHost>
<keyword id="KW-1043">Host membrane</keyword>
<keyword id="KW-0472">Membrane</keyword>
<keyword id="KW-1185">Reference proteome</keyword>
<keyword id="KW-0812">Transmembrane</keyword>
<keyword id="KW-1133">Transmembrane helix</keyword>